<accession>Q04B92</accession>
<comment type="function">
    <text evidence="1">One of the primary rRNA binding proteins, it binds directly to 16S rRNA where it nucleates assembly of the body of the 30S subunit.</text>
</comment>
<comment type="function">
    <text evidence="1">With S5 and S12 plays an important role in translational accuracy.</text>
</comment>
<comment type="subunit">
    <text evidence="1">Part of the 30S ribosomal subunit. Contacts protein S5. The interaction surface between S4 and S5 is involved in control of translational fidelity.</text>
</comment>
<comment type="similarity">
    <text evidence="1">Belongs to the universal ribosomal protein uS4 family.</text>
</comment>
<comment type="sequence caution" evidence="2">
    <conflict type="erroneous initiation">
        <sequence resource="EMBL-CDS" id="ABJ58280"/>
    </conflict>
</comment>
<feature type="chain" id="PRO_0000293456" description="Small ribosomal subunit protein uS4">
    <location>
        <begin position="1"/>
        <end position="203"/>
    </location>
</feature>
<feature type="domain" description="S4 RNA-binding" evidence="1">
    <location>
        <begin position="93"/>
        <end position="153"/>
    </location>
</feature>
<organism>
    <name type="scientific">Lactobacillus delbrueckii subsp. bulgaricus (strain ATCC BAA-365 / Lb-18)</name>
    <dbReference type="NCBI Taxonomy" id="321956"/>
    <lineage>
        <taxon>Bacteria</taxon>
        <taxon>Bacillati</taxon>
        <taxon>Bacillota</taxon>
        <taxon>Bacilli</taxon>
        <taxon>Lactobacillales</taxon>
        <taxon>Lactobacillaceae</taxon>
        <taxon>Lactobacillus</taxon>
    </lineage>
</organism>
<reference key="1">
    <citation type="journal article" date="2006" name="Proc. Natl. Acad. Sci. U.S.A.">
        <title>Comparative genomics of the lactic acid bacteria.</title>
        <authorList>
            <person name="Makarova K.S."/>
            <person name="Slesarev A."/>
            <person name="Wolf Y.I."/>
            <person name="Sorokin A."/>
            <person name="Mirkin B."/>
            <person name="Koonin E.V."/>
            <person name="Pavlov A."/>
            <person name="Pavlova N."/>
            <person name="Karamychev V."/>
            <person name="Polouchine N."/>
            <person name="Shakhova V."/>
            <person name="Grigoriev I."/>
            <person name="Lou Y."/>
            <person name="Rohksar D."/>
            <person name="Lucas S."/>
            <person name="Huang K."/>
            <person name="Goodstein D.M."/>
            <person name="Hawkins T."/>
            <person name="Plengvidhya V."/>
            <person name="Welker D."/>
            <person name="Hughes J."/>
            <person name="Goh Y."/>
            <person name="Benson A."/>
            <person name="Baldwin K."/>
            <person name="Lee J.-H."/>
            <person name="Diaz-Muniz I."/>
            <person name="Dosti B."/>
            <person name="Smeianov V."/>
            <person name="Wechter W."/>
            <person name="Barabote R."/>
            <person name="Lorca G."/>
            <person name="Altermann E."/>
            <person name="Barrangou R."/>
            <person name="Ganesan B."/>
            <person name="Xie Y."/>
            <person name="Rawsthorne H."/>
            <person name="Tamir D."/>
            <person name="Parker C."/>
            <person name="Breidt F."/>
            <person name="Broadbent J.R."/>
            <person name="Hutkins R."/>
            <person name="O'Sullivan D."/>
            <person name="Steele J."/>
            <person name="Unlu G."/>
            <person name="Saier M.H. Jr."/>
            <person name="Klaenhammer T."/>
            <person name="Richardson P."/>
            <person name="Kozyavkin S."/>
            <person name="Weimer B.C."/>
            <person name="Mills D.A."/>
        </authorList>
    </citation>
    <scope>NUCLEOTIDE SEQUENCE [LARGE SCALE GENOMIC DNA]</scope>
    <source>
        <strain>ATCC BAA-365 / Lb-18</strain>
    </source>
</reference>
<evidence type="ECO:0000255" key="1">
    <source>
        <dbReference type="HAMAP-Rule" id="MF_01306"/>
    </source>
</evidence>
<evidence type="ECO:0000305" key="2"/>
<name>RS4_LACDB</name>
<gene>
    <name evidence="1" type="primary">rpsD</name>
    <name type="ordered locus">LBUL_0654</name>
</gene>
<protein>
    <recommendedName>
        <fullName evidence="1">Small ribosomal subunit protein uS4</fullName>
    </recommendedName>
    <alternativeName>
        <fullName evidence="2">30S ribosomal protein S4</fullName>
    </alternativeName>
</protein>
<keyword id="KW-0687">Ribonucleoprotein</keyword>
<keyword id="KW-0689">Ribosomal protein</keyword>
<keyword id="KW-0694">RNA-binding</keyword>
<keyword id="KW-0699">rRNA-binding</keyword>
<proteinExistence type="inferred from homology"/>
<dbReference type="EMBL" id="CP000412">
    <property type="protein sequence ID" value="ABJ58280.1"/>
    <property type="status" value="ALT_INIT"/>
    <property type="molecule type" value="Genomic_DNA"/>
</dbReference>
<dbReference type="RefSeq" id="WP_003619125.1">
    <property type="nucleotide sequence ID" value="NC_008529.1"/>
</dbReference>
<dbReference type="SMR" id="Q04B92"/>
<dbReference type="KEGG" id="lbu:LBUL_0654"/>
<dbReference type="HOGENOM" id="CLU_092403_1_0_9"/>
<dbReference type="BioCyc" id="LDEL321956:LBUL_RS03115-MONOMER"/>
<dbReference type="GO" id="GO:0015935">
    <property type="term" value="C:small ribosomal subunit"/>
    <property type="evidence" value="ECO:0007669"/>
    <property type="project" value="InterPro"/>
</dbReference>
<dbReference type="GO" id="GO:0019843">
    <property type="term" value="F:rRNA binding"/>
    <property type="evidence" value="ECO:0007669"/>
    <property type="project" value="UniProtKB-UniRule"/>
</dbReference>
<dbReference type="GO" id="GO:0003735">
    <property type="term" value="F:structural constituent of ribosome"/>
    <property type="evidence" value="ECO:0007669"/>
    <property type="project" value="InterPro"/>
</dbReference>
<dbReference type="GO" id="GO:0042274">
    <property type="term" value="P:ribosomal small subunit biogenesis"/>
    <property type="evidence" value="ECO:0007669"/>
    <property type="project" value="TreeGrafter"/>
</dbReference>
<dbReference type="GO" id="GO:0006412">
    <property type="term" value="P:translation"/>
    <property type="evidence" value="ECO:0007669"/>
    <property type="project" value="UniProtKB-UniRule"/>
</dbReference>
<dbReference type="CDD" id="cd00165">
    <property type="entry name" value="S4"/>
    <property type="match status" value="1"/>
</dbReference>
<dbReference type="FunFam" id="3.10.290.10:FF:000001">
    <property type="entry name" value="30S ribosomal protein S4"/>
    <property type="match status" value="1"/>
</dbReference>
<dbReference type="Gene3D" id="1.10.1050.10">
    <property type="entry name" value="Ribosomal Protein S4 Delta 41, Chain A, domain 1"/>
    <property type="match status" value="1"/>
</dbReference>
<dbReference type="Gene3D" id="3.10.290.10">
    <property type="entry name" value="RNA-binding S4 domain"/>
    <property type="match status" value="1"/>
</dbReference>
<dbReference type="HAMAP" id="MF_01306_B">
    <property type="entry name" value="Ribosomal_uS4_B"/>
    <property type="match status" value="1"/>
</dbReference>
<dbReference type="InterPro" id="IPR022801">
    <property type="entry name" value="Ribosomal_uS4"/>
</dbReference>
<dbReference type="InterPro" id="IPR005709">
    <property type="entry name" value="Ribosomal_uS4_bac-type"/>
</dbReference>
<dbReference type="InterPro" id="IPR018079">
    <property type="entry name" value="Ribosomal_uS4_CS"/>
</dbReference>
<dbReference type="InterPro" id="IPR001912">
    <property type="entry name" value="Ribosomal_uS4_N"/>
</dbReference>
<dbReference type="InterPro" id="IPR002942">
    <property type="entry name" value="S4_RNA-bd"/>
</dbReference>
<dbReference type="InterPro" id="IPR036986">
    <property type="entry name" value="S4_RNA-bd_sf"/>
</dbReference>
<dbReference type="NCBIfam" id="NF003717">
    <property type="entry name" value="PRK05327.1"/>
    <property type="match status" value="1"/>
</dbReference>
<dbReference type="NCBIfam" id="TIGR01017">
    <property type="entry name" value="rpsD_bact"/>
    <property type="match status" value="1"/>
</dbReference>
<dbReference type="PANTHER" id="PTHR11831">
    <property type="entry name" value="30S 40S RIBOSOMAL PROTEIN"/>
    <property type="match status" value="1"/>
</dbReference>
<dbReference type="PANTHER" id="PTHR11831:SF4">
    <property type="entry name" value="SMALL RIBOSOMAL SUBUNIT PROTEIN US4M"/>
    <property type="match status" value="1"/>
</dbReference>
<dbReference type="Pfam" id="PF00163">
    <property type="entry name" value="Ribosomal_S4"/>
    <property type="match status" value="1"/>
</dbReference>
<dbReference type="Pfam" id="PF01479">
    <property type="entry name" value="S4"/>
    <property type="match status" value="1"/>
</dbReference>
<dbReference type="SMART" id="SM01390">
    <property type="entry name" value="Ribosomal_S4"/>
    <property type="match status" value="1"/>
</dbReference>
<dbReference type="SMART" id="SM00363">
    <property type="entry name" value="S4"/>
    <property type="match status" value="1"/>
</dbReference>
<dbReference type="SUPFAM" id="SSF55174">
    <property type="entry name" value="Alpha-L RNA-binding motif"/>
    <property type="match status" value="1"/>
</dbReference>
<dbReference type="PROSITE" id="PS00632">
    <property type="entry name" value="RIBOSOMAL_S4"/>
    <property type="match status" value="1"/>
</dbReference>
<dbReference type="PROSITE" id="PS50889">
    <property type="entry name" value="S4"/>
    <property type="match status" value="1"/>
</dbReference>
<sequence length="203" mass="23520">MSRYTGPSWKRSRRLGISLSGTGKELARRSYIPGQHGPNHRGRLSEYGMQLQEKQKLRWMFGLNERQFRTLFARAGKIREGQHGTNFMILLERRLDNVVYRLGLATTREQARQLVNHGHITVDGKRVDIPSYEVKVGQTISLKEKSKNLQQVKDALEAVASRPSFVSFDEDKMEGQLVRFPERDEMEPEIDEALVVEYYNKLL</sequence>